<reference evidence="4" key="1">
    <citation type="journal article" date="2005" name="Plant Cell">
        <title>A continent of plant defense peptide diversity: cyclotides in Australian Hybanthus (Violaceae).</title>
        <authorList>
            <person name="Simonsen S.M."/>
            <person name="Sando L."/>
            <person name="Ireland D.C."/>
            <person name="Colgrave M.L."/>
            <person name="Bharathi R."/>
            <person name="Goeransson U."/>
            <person name="Craik D.J."/>
        </authorList>
    </citation>
    <scope>PROTEIN SEQUENCE</scope>
</reference>
<name>HYFLC_HYBFL</name>
<proteinExistence type="evidence at protein level"/>
<protein>
    <recommendedName>
        <fullName>Cyclotide Hyfl-C</fullName>
    </recommendedName>
</protein>
<evidence type="ECO:0000250" key="1">
    <source>
        <dbReference type="UniProtKB" id="P56879"/>
    </source>
</evidence>
<evidence type="ECO:0000255" key="2">
    <source>
        <dbReference type="PROSITE-ProRule" id="PRU00395"/>
    </source>
</evidence>
<evidence type="ECO:0000269" key="3">
    <source>
    </source>
</evidence>
<evidence type="ECO:0000305" key="4"/>
<sequence length="32" mass="3509">GSPRQCAETCFIGKCYTEELGCTCTAFLCMKN</sequence>
<organism>
    <name type="scientific">Hybanthus floribundus</name>
    <name type="common">Greenviolet</name>
    <dbReference type="NCBI Taxonomy" id="343459"/>
    <lineage>
        <taxon>Eukaryota</taxon>
        <taxon>Viridiplantae</taxon>
        <taxon>Streptophyta</taxon>
        <taxon>Embryophyta</taxon>
        <taxon>Tracheophyta</taxon>
        <taxon>Spermatophyta</taxon>
        <taxon>Magnoliopsida</taxon>
        <taxon>eudicotyledons</taxon>
        <taxon>Gunneridae</taxon>
        <taxon>Pentapetalae</taxon>
        <taxon>rosids</taxon>
        <taxon>fabids</taxon>
        <taxon>Malpighiales</taxon>
        <taxon>Violaceae</taxon>
        <taxon>Hybanthus</taxon>
    </lineage>
</organism>
<accession>P84649</accession>
<keyword id="KW-0903">Direct protein sequencing</keyword>
<keyword id="KW-1015">Disulfide bond</keyword>
<keyword id="KW-0960">Knottin</keyword>
<keyword id="KW-0611">Plant defense</keyword>
<comment type="function">
    <text evidence="4">Probably participates in a plant defense mechanism.</text>
</comment>
<comment type="domain">
    <text evidence="1">The presence of a 'disulfide through disulfide knot' structurally defines this protein as a knottin.</text>
</comment>
<comment type="PTM">
    <text evidence="2 3">This is a cyclic peptide.</text>
</comment>
<comment type="similarity">
    <text evidence="2">Belongs to the cyclotide family. Moebius subfamily.</text>
</comment>
<comment type="caution">
    <text evidence="4">This peptide is cyclic. The start position was chosen by similarity to OAK1 (kalata-B1) for which the DNA sequence is known.</text>
</comment>
<feature type="peptide" id="PRO_0000044707" description="Cyclotide Hyfl-C">
    <location>
        <begin position="1"/>
        <end position="32"/>
    </location>
</feature>
<feature type="disulfide bond" evidence="1 2">
    <location>
        <begin position="6"/>
        <end position="22"/>
    </location>
</feature>
<feature type="disulfide bond" evidence="1 2">
    <location>
        <begin position="10"/>
        <end position="24"/>
    </location>
</feature>
<feature type="disulfide bond" evidence="1 2">
    <location>
        <begin position="15"/>
        <end position="29"/>
    </location>
</feature>
<feature type="cross-link" description="Cyclopeptide (Gly-Asn)" evidence="3">
    <location>
        <begin position="1"/>
        <end position="32"/>
    </location>
</feature>
<dbReference type="SMR" id="P84649"/>
<dbReference type="GO" id="GO:0006952">
    <property type="term" value="P:defense response"/>
    <property type="evidence" value="ECO:0007669"/>
    <property type="project" value="UniProtKB-KW"/>
</dbReference>
<dbReference type="InterPro" id="IPR005535">
    <property type="entry name" value="Cyclotide"/>
</dbReference>
<dbReference type="InterPro" id="IPR012324">
    <property type="entry name" value="Cyclotide_moebius_CS"/>
</dbReference>
<dbReference type="InterPro" id="IPR036146">
    <property type="entry name" value="Cyclotide_sf"/>
</dbReference>
<dbReference type="Pfam" id="PF03784">
    <property type="entry name" value="Cyclotide"/>
    <property type="match status" value="1"/>
</dbReference>
<dbReference type="PIRSF" id="PIRSF037891">
    <property type="entry name" value="Cycloviolacin"/>
    <property type="match status" value="1"/>
</dbReference>
<dbReference type="SUPFAM" id="SSF57038">
    <property type="entry name" value="Cyclotides"/>
    <property type="match status" value="1"/>
</dbReference>
<dbReference type="PROSITE" id="PS51052">
    <property type="entry name" value="CYCLOTIDE"/>
    <property type="match status" value="1"/>
</dbReference>
<dbReference type="PROSITE" id="PS60009">
    <property type="entry name" value="CYCLOTIDE_MOEBIUS"/>
    <property type="match status" value="1"/>
</dbReference>